<sequence>MCVIMGDFTDLDRQIEQLRRCELIKENEVKALCAKAREILVEESNVQSVDSPVTVCGDIHGQFYDLKELFRVGGEVPETNYLFMGDFVDRGFYSVETFLLLLALKVRYPDRITLIRGNHESRQITQVYGFFDECHRKYGSATVWRYCTEIFDYLSLSAIVDGKIFCVHGGLSPSIQTLDQIRTIDRKQEVPHDGPMCDLLWSDPEDTTGWGVSPRGAGYLFGSDVVAQFNAANDISMICRAHQLVMEGYKWHFNDTVLTVWSAPNYCYRCGNVAAILELDEHLQKEFIIFEAAPQETRGLPSKKPVADYFL</sequence>
<comment type="function">
    <text evidence="1">Protein phosphatase that regulates many processes such as microtubule organization at centrosomes.</text>
</comment>
<comment type="catalytic activity">
    <reaction>
        <text>O-phospho-L-seryl-[protein] + H2O = L-seryl-[protein] + phosphate</text>
        <dbReference type="Rhea" id="RHEA:20629"/>
        <dbReference type="Rhea" id="RHEA-COMP:9863"/>
        <dbReference type="Rhea" id="RHEA-COMP:11604"/>
        <dbReference type="ChEBI" id="CHEBI:15377"/>
        <dbReference type="ChEBI" id="CHEBI:29999"/>
        <dbReference type="ChEBI" id="CHEBI:43474"/>
        <dbReference type="ChEBI" id="CHEBI:83421"/>
        <dbReference type="EC" id="3.1.3.16"/>
    </reaction>
</comment>
<comment type="catalytic activity">
    <reaction>
        <text>O-phospho-L-threonyl-[protein] + H2O = L-threonyl-[protein] + phosphate</text>
        <dbReference type="Rhea" id="RHEA:47004"/>
        <dbReference type="Rhea" id="RHEA-COMP:11060"/>
        <dbReference type="Rhea" id="RHEA-COMP:11605"/>
        <dbReference type="ChEBI" id="CHEBI:15377"/>
        <dbReference type="ChEBI" id="CHEBI:30013"/>
        <dbReference type="ChEBI" id="CHEBI:43474"/>
        <dbReference type="ChEBI" id="CHEBI:61977"/>
        <dbReference type="EC" id="3.1.3.16"/>
    </reaction>
</comment>
<comment type="cofactor">
    <cofactor evidence="1">
        <name>Mn(2+)</name>
        <dbReference type="ChEBI" id="CHEBI:29035"/>
    </cofactor>
    <text evidence="1">Binds 2 manganese ions per subunit.</text>
</comment>
<comment type="subunit">
    <text evidence="1">Serine/threonine-protein phosphatase 4 (PP4) occurs in different assemblies of the catalytic and one or more regulatory subunits.</text>
</comment>
<comment type="subcellular location">
    <subcellularLocation>
        <location evidence="1">Cytoplasm</location>
    </subcellularLocation>
    <subcellularLocation>
        <location evidence="1">Cytoplasm</location>
        <location evidence="1">Cytoskeleton</location>
        <location evidence="1">Microtubule organizing center</location>
        <location evidence="1">Centrosome</location>
    </subcellularLocation>
</comment>
<comment type="similarity">
    <text evidence="2">Belongs to the PPP phosphatase family. PP-4 (PP-X) subfamily.</text>
</comment>
<keyword id="KW-0963">Cytoplasm</keyword>
<keyword id="KW-0206">Cytoskeleton</keyword>
<keyword id="KW-0378">Hydrolase</keyword>
<keyword id="KW-0464">Manganese</keyword>
<keyword id="KW-0479">Metal-binding</keyword>
<keyword id="KW-0488">Methylation</keyword>
<keyword id="KW-0904">Protein phosphatase</keyword>
<keyword id="KW-1185">Reference proteome</keyword>
<gene>
    <name type="primary">ppp4ca</name>
    <name type="synonym">pp4c</name>
    <name type="ORF">zgc:56413</name>
</gene>
<name>PP4CA_DANRE</name>
<proteinExistence type="evidence at transcript level"/>
<evidence type="ECO:0000250" key="1"/>
<evidence type="ECO:0000305" key="2"/>
<reference key="1">
    <citation type="submission" date="2007-11" db="EMBL/GenBank/DDBJ databases">
        <authorList>
            <consortium name="NIH - Zebrafish Gene Collection (ZGC) project"/>
        </authorList>
    </citation>
    <scope>NUCLEOTIDE SEQUENCE [LARGE SCALE MRNA]</scope>
    <source>
        <tissue>Embryo</tissue>
    </source>
</reference>
<feature type="chain" id="PRO_0000353206" description="Serine/threonine-protein phosphatase 4 catalytic subunit A">
    <location>
        <begin position="1"/>
        <end position="311"/>
    </location>
</feature>
<feature type="active site" description="Proton donor" evidence="1">
    <location>
        <position position="119"/>
    </location>
</feature>
<feature type="binding site" evidence="1">
    <location>
        <position position="58"/>
    </location>
    <ligand>
        <name>Mn(2+)</name>
        <dbReference type="ChEBI" id="CHEBI:29035"/>
        <label>1</label>
    </ligand>
</feature>
<feature type="binding site" evidence="1">
    <location>
        <position position="60"/>
    </location>
    <ligand>
        <name>Mn(2+)</name>
        <dbReference type="ChEBI" id="CHEBI:29035"/>
        <label>1</label>
    </ligand>
</feature>
<feature type="binding site" evidence="1">
    <location>
        <position position="86"/>
    </location>
    <ligand>
        <name>Mn(2+)</name>
        <dbReference type="ChEBI" id="CHEBI:29035"/>
        <label>1</label>
    </ligand>
</feature>
<feature type="binding site" evidence="1">
    <location>
        <position position="86"/>
    </location>
    <ligand>
        <name>Mn(2+)</name>
        <dbReference type="ChEBI" id="CHEBI:29035"/>
        <label>2</label>
    </ligand>
</feature>
<feature type="binding site" evidence="1">
    <location>
        <position position="118"/>
    </location>
    <ligand>
        <name>Mn(2+)</name>
        <dbReference type="ChEBI" id="CHEBI:29035"/>
        <label>2</label>
    </ligand>
</feature>
<feature type="binding site" evidence="1">
    <location>
        <position position="168"/>
    </location>
    <ligand>
        <name>Mn(2+)</name>
        <dbReference type="ChEBI" id="CHEBI:29035"/>
        <label>2</label>
    </ligand>
</feature>
<feature type="binding site" evidence="1">
    <location>
        <position position="242"/>
    </location>
    <ligand>
        <name>Mn(2+)</name>
        <dbReference type="ChEBI" id="CHEBI:29035"/>
        <label>2</label>
    </ligand>
</feature>
<feature type="modified residue" description="Leucine methyl ester" evidence="1">
    <location>
        <position position="311"/>
    </location>
</feature>
<feature type="sequence conflict" description="In Ref. 1; AAH49430." evidence="2" ref="1">
    <original>Y</original>
    <variation>H</variation>
    <location>
        <position position="128"/>
    </location>
</feature>
<dbReference type="EC" id="3.1.3.16"/>
<dbReference type="EMBL" id="BC049430">
    <property type="protein sequence ID" value="AAH49430.1"/>
    <property type="molecule type" value="mRNA"/>
</dbReference>
<dbReference type="EMBL" id="BC154790">
    <property type="protein sequence ID" value="AAI54791.1"/>
    <property type="molecule type" value="mRNA"/>
</dbReference>
<dbReference type="RefSeq" id="NP_001103884.1">
    <property type="nucleotide sequence ID" value="NM_001110414.1"/>
</dbReference>
<dbReference type="SMR" id="A8WGP3"/>
<dbReference type="FunCoup" id="A8WGP3">
    <property type="interactions" value="1076"/>
</dbReference>
<dbReference type="STRING" id="7955.ENSDARP00000094516"/>
<dbReference type="PaxDb" id="7955-ENSDARP00000094516"/>
<dbReference type="PeptideAtlas" id="A8WGP3"/>
<dbReference type="Ensembl" id="ENSDART00000103741">
    <property type="protein sequence ID" value="ENSDARP00000094516"/>
    <property type="gene ID" value="ENSDARG00000070570"/>
</dbReference>
<dbReference type="GeneID" id="100003080"/>
<dbReference type="KEGG" id="dre:100003080"/>
<dbReference type="AGR" id="ZFIN:ZDB-GENE-030131-4433"/>
<dbReference type="CTD" id="100003080"/>
<dbReference type="ZFIN" id="ZDB-GENE-030131-4433">
    <property type="gene designation" value="ppp4ca"/>
</dbReference>
<dbReference type="eggNOG" id="KOG0372">
    <property type="taxonomic scope" value="Eukaryota"/>
</dbReference>
<dbReference type="HOGENOM" id="CLU_004962_8_1_1"/>
<dbReference type="InParanoid" id="A8WGP3"/>
<dbReference type="OMA" id="KCETLPA"/>
<dbReference type="OrthoDB" id="1930084at2759"/>
<dbReference type="PhylomeDB" id="A8WGP3"/>
<dbReference type="TreeFam" id="TF105559"/>
<dbReference type="PRO" id="PR:A8WGP3"/>
<dbReference type="Proteomes" id="UP000000437">
    <property type="component" value="Chromosome 3"/>
</dbReference>
<dbReference type="Bgee" id="ENSDARG00000070570">
    <property type="expression patterns" value="Expressed in cleaving embryo and 29 other cell types or tissues"/>
</dbReference>
<dbReference type="ExpressionAtlas" id="A8WGP3">
    <property type="expression patterns" value="baseline and differential"/>
</dbReference>
<dbReference type="GO" id="GO:0005813">
    <property type="term" value="C:centrosome"/>
    <property type="evidence" value="ECO:0007669"/>
    <property type="project" value="UniProtKB-SubCell"/>
</dbReference>
<dbReference type="GO" id="GO:0005737">
    <property type="term" value="C:cytoplasm"/>
    <property type="evidence" value="ECO:0000318"/>
    <property type="project" value="GO_Central"/>
</dbReference>
<dbReference type="GO" id="GO:0005634">
    <property type="term" value="C:nucleus"/>
    <property type="evidence" value="ECO:0000318"/>
    <property type="project" value="GO_Central"/>
</dbReference>
<dbReference type="GO" id="GO:0046872">
    <property type="term" value="F:metal ion binding"/>
    <property type="evidence" value="ECO:0007669"/>
    <property type="project" value="UniProtKB-KW"/>
</dbReference>
<dbReference type="GO" id="GO:0004722">
    <property type="term" value="F:protein serine/threonine phosphatase activity"/>
    <property type="evidence" value="ECO:0000318"/>
    <property type="project" value="GO_Central"/>
</dbReference>
<dbReference type="GO" id="GO:0001525">
    <property type="term" value="P:angiogenesis"/>
    <property type="evidence" value="ECO:0000315"/>
    <property type="project" value="ZFIN"/>
</dbReference>
<dbReference type="GO" id="GO:0007420">
    <property type="term" value="P:brain development"/>
    <property type="evidence" value="ECO:0000315"/>
    <property type="project" value="ZFIN"/>
</dbReference>
<dbReference type="GO" id="GO:0021952">
    <property type="term" value="P:central nervous system projection neuron axonogenesis"/>
    <property type="evidence" value="ECO:0000315"/>
    <property type="project" value="ZFIN"/>
</dbReference>
<dbReference type="GO" id="GO:0048264">
    <property type="term" value="P:determination of ventral identity"/>
    <property type="evidence" value="ECO:0000315"/>
    <property type="project" value="ZFIN"/>
</dbReference>
<dbReference type="GO" id="GO:0009953">
    <property type="term" value="P:dorsal/ventral pattern formation"/>
    <property type="evidence" value="ECO:0000315"/>
    <property type="project" value="ZFIN"/>
</dbReference>
<dbReference type="GO" id="GO:0000724">
    <property type="term" value="P:double-strand break repair via homologous recombination"/>
    <property type="evidence" value="ECO:0000318"/>
    <property type="project" value="GO_Central"/>
</dbReference>
<dbReference type="CDD" id="cd07415">
    <property type="entry name" value="MPP_PP2A_PP4_PP6"/>
    <property type="match status" value="1"/>
</dbReference>
<dbReference type="FunFam" id="3.60.21.10:FF:000010">
    <property type="entry name" value="Serine/threonine-protein phosphatase"/>
    <property type="match status" value="1"/>
</dbReference>
<dbReference type="Gene3D" id="3.60.21.10">
    <property type="match status" value="1"/>
</dbReference>
<dbReference type="InterPro" id="IPR004843">
    <property type="entry name" value="Calcineurin-like_PHP_ApaH"/>
</dbReference>
<dbReference type="InterPro" id="IPR029052">
    <property type="entry name" value="Metallo-depent_PP-like"/>
</dbReference>
<dbReference type="InterPro" id="IPR047129">
    <property type="entry name" value="PPA2-like"/>
</dbReference>
<dbReference type="InterPro" id="IPR006186">
    <property type="entry name" value="Ser/Thr-sp_prot-phosphatase"/>
</dbReference>
<dbReference type="PANTHER" id="PTHR45619">
    <property type="entry name" value="SERINE/THREONINE-PROTEIN PHOSPHATASE PP2A-RELATED"/>
    <property type="match status" value="1"/>
</dbReference>
<dbReference type="Pfam" id="PF00149">
    <property type="entry name" value="Metallophos"/>
    <property type="match status" value="1"/>
</dbReference>
<dbReference type="PRINTS" id="PR00114">
    <property type="entry name" value="STPHPHTASE"/>
</dbReference>
<dbReference type="SMART" id="SM00156">
    <property type="entry name" value="PP2Ac"/>
    <property type="match status" value="1"/>
</dbReference>
<dbReference type="SUPFAM" id="SSF56300">
    <property type="entry name" value="Metallo-dependent phosphatases"/>
    <property type="match status" value="1"/>
</dbReference>
<dbReference type="PROSITE" id="PS00125">
    <property type="entry name" value="SER_THR_PHOSPHATASE"/>
    <property type="match status" value="1"/>
</dbReference>
<protein>
    <recommendedName>
        <fullName>Serine/threonine-protein phosphatase 4 catalytic subunit A</fullName>
        <shortName>PP4C-A</shortName>
        <ecNumber>3.1.3.16</ecNumber>
    </recommendedName>
</protein>
<accession>A8WGP3</accession>
<accession>Q7ZWF9</accession>
<organism>
    <name type="scientific">Danio rerio</name>
    <name type="common">Zebrafish</name>
    <name type="synonym">Brachydanio rerio</name>
    <dbReference type="NCBI Taxonomy" id="7955"/>
    <lineage>
        <taxon>Eukaryota</taxon>
        <taxon>Metazoa</taxon>
        <taxon>Chordata</taxon>
        <taxon>Craniata</taxon>
        <taxon>Vertebrata</taxon>
        <taxon>Euteleostomi</taxon>
        <taxon>Actinopterygii</taxon>
        <taxon>Neopterygii</taxon>
        <taxon>Teleostei</taxon>
        <taxon>Ostariophysi</taxon>
        <taxon>Cypriniformes</taxon>
        <taxon>Danionidae</taxon>
        <taxon>Danioninae</taxon>
        <taxon>Danio</taxon>
    </lineage>
</organism>